<organism>
    <name type="scientific">Thermobifida fusca (strain YX)</name>
    <dbReference type="NCBI Taxonomy" id="269800"/>
    <lineage>
        <taxon>Bacteria</taxon>
        <taxon>Bacillati</taxon>
        <taxon>Actinomycetota</taxon>
        <taxon>Actinomycetes</taxon>
        <taxon>Streptosporangiales</taxon>
        <taxon>Nocardiopsidaceae</taxon>
        <taxon>Thermobifida</taxon>
    </lineage>
</organism>
<evidence type="ECO:0000255" key="1">
    <source>
        <dbReference type="HAMAP-Rule" id="MF_00303"/>
    </source>
</evidence>
<evidence type="ECO:0000256" key="2">
    <source>
        <dbReference type="SAM" id="MobiDB-lite"/>
    </source>
</evidence>
<reference key="1">
    <citation type="journal article" date="2007" name="J. Bacteriol.">
        <title>Genome sequence and analysis of the soil cellulolytic actinomycete Thermobifida fusca YX.</title>
        <authorList>
            <person name="Lykidis A."/>
            <person name="Mavromatis K."/>
            <person name="Ivanova N."/>
            <person name="Anderson I."/>
            <person name="Land M."/>
            <person name="DiBartolo G."/>
            <person name="Martinez M."/>
            <person name="Lapidus A."/>
            <person name="Lucas S."/>
            <person name="Copeland A."/>
            <person name="Richardson P."/>
            <person name="Wilson D.B."/>
            <person name="Kyrpides N."/>
        </authorList>
    </citation>
    <scope>NUCLEOTIDE SEQUENCE [LARGE SCALE GENOMIC DNA]</scope>
    <source>
        <strain>YX</strain>
    </source>
</reference>
<keyword id="KW-0131">Cell cycle</keyword>
<keyword id="KW-0132">Cell division</keyword>
<keyword id="KW-0143">Chaperone</keyword>
<keyword id="KW-0963">Cytoplasm</keyword>
<keyword id="KW-0413">Isomerase</keyword>
<keyword id="KW-0697">Rotamase</keyword>
<accession>Q47MU1</accession>
<dbReference type="EC" id="5.2.1.8" evidence="1"/>
<dbReference type="EMBL" id="CP000088">
    <property type="protein sequence ID" value="AAZ56228.1"/>
    <property type="molecule type" value="Genomic_DNA"/>
</dbReference>
<dbReference type="RefSeq" id="WP_011292618.1">
    <property type="nucleotide sequence ID" value="NC_007333.1"/>
</dbReference>
<dbReference type="SMR" id="Q47MU1"/>
<dbReference type="STRING" id="269800.Tfu_2195"/>
<dbReference type="KEGG" id="tfu:Tfu_2195"/>
<dbReference type="eggNOG" id="COG0544">
    <property type="taxonomic scope" value="Bacteria"/>
</dbReference>
<dbReference type="HOGENOM" id="CLU_033058_3_0_11"/>
<dbReference type="OrthoDB" id="9767721at2"/>
<dbReference type="GO" id="GO:0005737">
    <property type="term" value="C:cytoplasm"/>
    <property type="evidence" value="ECO:0007669"/>
    <property type="project" value="UniProtKB-SubCell"/>
</dbReference>
<dbReference type="GO" id="GO:0003755">
    <property type="term" value="F:peptidyl-prolyl cis-trans isomerase activity"/>
    <property type="evidence" value="ECO:0007669"/>
    <property type="project" value="UniProtKB-UniRule"/>
</dbReference>
<dbReference type="GO" id="GO:0044183">
    <property type="term" value="F:protein folding chaperone"/>
    <property type="evidence" value="ECO:0007669"/>
    <property type="project" value="TreeGrafter"/>
</dbReference>
<dbReference type="GO" id="GO:0043022">
    <property type="term" value="F:ribosome binding"/>
    <property type="evidence" value="ECO:0007669"/>
    <property type="project" value="TreeGrafter"/>
</dbReference>
<dbReference type="GO" id="GO:0051083">
    <property type="term" value="P:'de novo' cotranslational protein folding"/>
    <property type="evidence" value="ECO:0007669"/>
    <property type="project" value="TreeGrafter"/>
</dbReference>
<dbReference type="GO" id="GO:0051301">
    <property type="term" value="P:cell division"/>
    <property type="evidence" value="ECO:0007669"/>
    <property type="project" value="UniProtKB-KW"/>
</dbReference>
<dbReference type="GO" id="GO:0061077">
    <property type="term" value="P:chaperone-mediated protein folding"/>
    <property type="evidence" value="ECO:0007669"/>
    <property type="project" value="TreeGrafter"/>
</dbReference>
<dbReference type="GO" id="GO:0015031">
    <property type="term" value="P:protein transport"/>
    <property type="evidence" value="ECO:0007669"/>
    <property type="project" value="UniProtKB-UniRule"/>
</dbReference>
<dbReference type="GO" id="GO:0043335">
    <property type="term" value="P:protein unfolding"/>
    <property type="evidence" value="ECO:0007669"/>
    <property type="project" value="TreeGrafter"/>
</dbReference>
<dbReference type="Gene3D" id="3.10.50.40">
    <property type="match status" value="1"/>
</dbReference>
<dbReference type="Gene3D" id="3.30.70.1050">
    <property type="entry name" value="Trigger factor ribosome-binding domain"/>
    <property type="match status" value="1"/>
</dbReference>
<dbReference type="Gene3D" id="1.10.3120.10">
    <property type="entry name" value="Trigger factor, C-terminal domain"/>
    <property type="match status" value="1"/>
</dbReference>
<dbReference type="HAMAP" id="MF_00303">
    <property type="entry name" value="Trigger_factor_Tig"/>
    <property type="match status" value="1"/>
</dbReference>
<dbReference type="InterPro" id="IPR046357">
    <property type="entry name" value="PPIase_dom_sf"/>
</dbReference>
<dbReference type="InterPro" id="IPR001179">
    <property type="entry name" value="PPIase_FKBP_dom"/>
</dbReference>
<dbReference type="InterPro" id="IPR005215">
    <property type="entry name" value="Trig_fac"/>
</dbReference>
<dbReference type="InterPro" id="IPR008880">
    <property type="entry name" value="Trigger_fac_C"/>
</dbReference>
<dbReference type="InterPro" id="IPR037041">
    <property type="entry name" value="Trigger_fac_C_sf"/>
</dbReference>
<dbReference type="InterPro" id="IPR008881">
    <property type="entry name" value="Trigger_fac_ribosome-bd_bac"/>
</dbReference>
<dbReference type="InterPro" id="IPR036611">
    <property type="entry name" value="Trigger_fac_ribosome-bd_sf"/>
</dbReference>
<dbReference type="InterPro" id="IPR027304">
    <property type="entry name" value="Trigger_fact/SurA_dom_sf"/>
</dbReference>
<dbReference type="NCBIfam" id="TIGR00115">
    <property type="entry name" value="tig"/>
    <property type="match status" value="1"/>
</dbReference>
<dbReference type="PANTHER" id="PTHR30560">
    <property type="entry name" value="TRIGGER FACTOR CHAPERONE AND PEPTIDYL-PROLYL CIS/TRANS ISOMERASE"/>
    <property type="match status" value="1"/>
</dbReference>
<dbReference type="PANTHER" id="PTHR30560:SF3">
    <property type="entry name" value="TRIGGER FACTOR-LIKE PROTEIN TIG, CHLOROPLASTIC"/>
    <property type="match status" value="1"/>
</dbReference>
<dbReference type="Pfam" id="PF00254">
    <property type="entry name" value="FKBP_C"/>
    <property type="match status" value="1"/>
</dbReference>
<dbReference type="Pfam" id="PF05698">
    <property type="entry name" value="Trigger_C"/>
    <property type="match status" value="1"/>
</dbReference>
<dbReference type="Pfam" id="PF05697">
    <property type="entry name" value="Trigger_N"/>
    <property type="match status" value="1"/>
</dbReference>
<dbReference type="PIRSF" id="PIRSF003095">
    <property type="entry name" value="Trigger_factor"/>
    <property type="match status" value="1"/>
</dbReference>
<dbReference type="SUPFAM" id="SSF54534">
    <property type="entry name" value="FKBP-like"/>
    <property type="match status" value="1"/>
</dbReference>
<dbReference type="SUPFAM" id="SSF109998">
    <property type="entry name" value="Triger factor/SurA peptide-binding domain-like"/>
    <property type="match status" value="1"/>
</dbReference>
<dbReference type="SUPFAM" id="SSF102735">
    <property type="entry name" value="Trigger factor ribosome-binding domain"/>
    <property type="match status" value="1"/>
</dbReference>
<dbReference type="PROSITE" id="PS50059">
    <property type="entry name" value="FKBP_PPIASE"/>
    <property type="match status" value="1"/>
</dbReference>
<comment type="function">
    <text evidence="1">Involved in protein export. Acts as a chaperone by maintaining the newly synthesized protein in an open conformation. Functions as a peptidyl-prolyl cis-trans isomerase.</text>
</comment>
<comment type="catalytic activity">
    <reaction evidence="1">
        <text>[protein]-peptidylproline (omega=180) = [protein]-peptidylproline (omega=0)</text>
        <dbReference type="Rhea" id="RHEA:16237"/>
        <dbReference type="Rhea" id="RHEA-COMP:10747"/>
        <dbReference type="Rhea" id="RHEA-COMP:10748"/>
        <dbReference type="ChEBI" id="CHEBI:83833"/>
        <dbReference type="ChEBI" id="CHEBI:83834"/>
        <dbReference type="EC" id="5.2.1.8"/>
    </reaction>
</comment>
<comment type="subcellular location">
    <subcellularLocation>
        <location>Cytoplasm</location>
    </subcellularLocation>
    <text evidence="1">About half TF is bound to the ribosome near the polypeptide exit tunnel while the other half is free in the cytoplasm.</text>
</comment>
<comment type="domain">
    <text evidence="1">Consists of 3 domains; the N-terminus binds the ribosome, the middle domain has PPIase activity, while the C-terminus has intrinsic chaperone activity on its own.</text>
</comment>
<comment type="similarity">
    <text evidence="1">Belongs to the FKBP-type PPIase family. Tig subfamily.</text>
</comment>
<protein>
    <recommendedName>
        <fullName evidence="1">Trigger factor</fullName>
        <shortName evidence="1">TF</shortName>
        <ecNumber evidence="1">5.2.1.8</ecNumber>
    </recommendedName>
    <alternativeName>
        <fullName evidence="1">PPIase</fullName>
    </alternativeName>
</protein>
<sequence>MKTAVEELSPTRVKLTIEVPFEELDHAFDVTYKSLAKQVRIKGFRPGKAPAKLIDRYVGRGAVLTQAVNHAVPELYSEAVSKEEVPVLGPPEVEITRLEDGKELAFTAEVDVRPKFEVTDYEGIEVTVDDAEVTEEQVNERLEALRQRFATLIGVDRPAEQGDHVSIDLSASVDGKKLEDAQASGVSYEIGAGTLLQGLDEAIIGLSAGESATFTTTLVGGEHKGREADVTVTVHSVKLKELPELDDEFARLASEFDTIEELRASEAERLGELLRAQQLRQARDRVLEKLVDSIDIPLPESVIKQEADRRRELLDRQLSQSGLSKEAYLEAQEKTEEEFEAELTENATRAVKTGFVLDQLASQENLTASNEELTQYVVEQAQSMGISPDQLFQSLMQANQLQLVYVEVLRAKALDLVVSKAKITDESGNTIEPPTPVHTETITVASGDEETEESAAEQGETEK</sequence>
<proteinExistence type="inferred from homology"/>
<name>TIG_THEFY</name>
<gene>
    <name evidence="1" type="primary">tig</name>
    <name type="ordered locus">Tfu_2195</name>
</gene>
<feature type="chain" id="PRO_0000256636" description="Trigger factor">
    <location>
        <begin position="1"/>
        <end position="463"/>
    </location>
</feature>
<feature type="domain" description="PPIase FKBP-type" evidence="1">
    <location>
        <begin position="162"/>
        <end position="243"/>
    </location>
</feature>
<feature type="region of interest" description="Disordered" evidence="2">
    <location>
        <begin position="427"/>
        <end position="463"/>
    </location>
</feature>
<feature type="compositionally biased region" description="Polar residues" evidence="2">
    <location>
        <begin position="427"/>
        <end position="444"/>
    </location>
</feature>